<feature type="chain" id="PRO_0000389450" description="DnaA regulatory inactivator Hda">
    <location>
        <begin position="1"/>
        <end position="248"/>
    </location>
</feature>
<accession>B4EY85</accession>
<dbReference type="EMBL" id="AM942759">
    <property type="protein sequence ID" value="CAR43293.1"/>
    <property type="molecule type" value="Genomic_DNA"/>
</dbReference>
<dbReference type="SMR" id="B4EY85"/>
<dbReference type="EnsemblBacteria" id="CAR43293">
    <property type="protein sequence ID" value="CAR43293"/>
    <property type="gene ID" value="PMI1571"/>
</dbReference>
<dbReference type="KEGG" id="pmr:PMI1571"/>
<dbReference type="eggNOG" id="COG0593">
    <property type="taxonomic scope" value="Bacteria"/>
</dbReference>
<dbReference type="HOGENOM" id="CLU_072265_1_1_6"/>
<dbReference type="Proteomes" id="UP000008319">
    <property type="component" value="Chromosome"/>
</dbReference>
<dbReference type="GO" id="GO:0006270">
    <property type="term" value="P:DNA replication initiation"/>
    <property type="evidence" value="ECO:0007669"/>
    <property type="project" value="TreeGrafter"/>
</dbReference>
<dbReference type="GO" id="GO:0032297">
    <property type="term" value="P:negative regulation of DNA-templated DNA replication initiation"/>
    <property type="evidence" value="ECO:0007669"/>
    <property type="project" value="InterPro"/>
</dbReference>
<dbReference type="FunFam" id="1.10.8.60:FF:000024">
    <property type="entry name" value="DnaA regulatory inactivator Hda"/>
    <property type="match status" value="1"/>
</dbReference>
<dbReference type="FunFam" id="3.40.50.300:FF:000452">
    <property type="entry name" value="DnaA regulatory inactivator Hda"/>
    <property type="match status" value="1"/>
</dbReference>
<dbReference type="Gene3D" id="1.10.8.60">
    <property type="match status" value="1"/>
</dbReference>
<dbReference type="Gene3D" id="3.40.50.300">
    <property type="entry name" value="P-loop containing nucleotide triphosphate hydrolases"/>
    <property type="match status" value="1"/>
</dbReference>
<dbReference type="HAMAP" id="MF_01158">
    <property type="entry name" value="Hda"/>
    <property type="match status" value="1"/>
</dbReference>
<dbReference type="InterPro" id="IPR020591">
    <property type="entry name" value="Chromosome_initiator_DnaA-like"/>
</dbReference>
<dbReference type="InterPro" id="IPR013317">
    <property type="entry name" value="DnaA_dom"/>
</dbReference>
<dbReference type="InterPro" id="IPR017788">
    <property type="entry name" value="Hda"/>
</dbReference>
<dbReference type="InterPro" id="IPR022864">
    <property type="entry name" value="Hda_Enterobact"/>
</dbReference>
<dbReference type="InterPro" id="IPR055199">
    <property type="entry name" value="Hda_lid"/>
</dbReference>
<dbReference type="InterPro" id="IPR027417">
    <property type="entry name" value="P-loop_NTPase"/>
</dbReference>
<dbReference type="NCBIfam" id="TIGR03420">
    <property type="entry name" value="DnaA_homol_Hda"/>
    <property type="match status" value="1"/>
</dbReference>
<dbReference type="NCBIfam" id="NF005982">
    <property type="entry name" value="PRK08084.1"/>
    <property type="match status" value="1"/>
</dbReference>
<dbReference type="PANTHER" id="PTHR30050">
    <property type="entry name" value="CHROMOSOMAL REPLICATION INITIATOR PROTEIN DNAA"/>
    <property type="match status" value="1"/>
</dbReference>
<dbReference type="PANTHER" id="PTHR30050:SF5">
    <property type="entry name" value="DNAA REGULATORY INACTIVATOR HDA"/>
    <property type="match status" value="1"/>
</dbReference>
<dbReference type="Pfam" id="PF00308">
    <property type="entry name" value="Bac_DnaA"/>
    <property type="match status" value="1"/>
</dbReference>
<dbReference type="Pfam" id="PF22688">
    <property type="entry name" value="Hda_lid"/>
    <property type="match status" value="1"/>
</dbReference>
<dbReference type="PRINTS" id="PR00051">
    <property type="entry name" value="DNAA"/>
</dbReference>
<dbReference type="SUPFAM" id="SSF52540">
    <property type="entry name" value="P-loop containing nucleoside triphosphate hydrolases"/>
    <property type="match status" value="1"/>
</dbReference>
<organism>
    <name type="scientific">Proteus mirabilis (strain HI4320)</name>
    <dbReference type="NCBI Taxonomy" id="529507"/>
    <lineage>
        <taxon>Bacteria</taxon>
        <taxon>Pseudomonadati</taxon>
        <taxon>Pseudomonadota</taxon>
        <taxon>Gammaproteobacteria</taxon>
        <taxon>Enterobacterales</taxon>
        <taxon>Morganellaceae</taxon>
        <taxon>Proteus</taxon>
    </lineage>
</organism>
<comment type="function">
    <text evidence="1">Mediates the interaction of DNA replication initiator protein DnaA with DNA polymerase subunit beta sliding clamp (dnaN). Stimulates hydrolysis of ATP-DnaA to ADP-DnaA, rendering DnaA inactive for reinitiation, a process called regulatory inhibition of DnaA or RIDA (By similarity).</text>
</comment>
<comment type="subunit">
    <text evidence="2">The active form seems to be an ADP-bound monomer. Forms the RIDA complex (regulatory inactivation of DnaA) of ATP-DnaA, ADP-Hda and the DNA-loaded beta sliding clamp (dnaN).</text>
</comment>
<comment type="similarity">
    <text evidence="2">Belongs to the DnaA family. HdA subfamily.</text>
</comment>
<reference key="1">
    <citation type="journal article" date="2008" name="J. Bacteriol.">
        <title>Complete genome sequence of uropathogenic Proteus mirabilis, a master of both adherence and motility.</title>
        <authorList>
            <person name="Pearson M.M."/>
            <person name="Sebaihia M."/>
            <person name="Churcher C."/>
            <person name="Quail M.A."/>
            <person name="Seshasayee A.S."/>
            <person name="Luscombe N.M."/>
            <person name="Abdellah Z."/>
            <person name="Arrosmith C."/>
            <person name="Atkin B."/>
            <person name="Chillingworth T."/>
            <person name="Hauser H."/>
            <person name="Jagels K."/>
            <person name="Moule S."/>
            <person name="Mungall K."/>
            <person name="Norbertczak H."/>
            <person name="Rabbinowitsch E."/>
            <person name="Walker D."/>
            <person name="Whithead S."/>
            <person name="Thomson N.R."/>
            <person name="Rather P.N."/>
            <person name="Parkhill J."/>
            <person name="Mobley H.L.T."/>
        </authorList>
    </citation>
    <scope>NUCLEOTIDE SEQUENCE [LARGE SCALE GENOMIC DNA]</scope>
    <source>
        <strain>HI4320</strain>
    </source>
</reference>
<name>HDA_PROMH</name>
<gene>
    <name evidence="2" type="primary">hda</name>
    <name type="ordered locus">PMI1571</name>
</gene>
<keyword id="KW-0235">DNA replication</keyword>
<keyword id="KW-0236">DNA replication inhibitor</keyword>
<keyword id="KW-1185">Reference proteome</keyword>
<sequence length="248" mass="28068">MLESRRLLNYSGEVLLNTPSQLSLPLSLPDDETFDSFYAGENASLVAAIQTAIHQSHGSYIYFWSRDGGGKSHLLHAACAELSLAGDAVGYVPLDKRAYFVPDVLEGMEHLSLVCIDNVQCIAGDEEWELALFNLYNRVLELGRTCLLITGDRPPRQIDLQLPDLASRLDWGQIYRLQPLSDEEKIQALQLRAKLRGFELPEDVGRFVLKRLDRKMRTLFEMLDELDHASIVAQRKLTIPFVKDILKL</sequence>
<protein>
    <recommendedName>
        <fullName evidence="2">DnaA regulatory inactivator Hda</fullName>
    </recommendedName>
</protein>
<evidence type="ECO:0000250" key="1"/>
<evidence type="ECO:0000255" key="2">
    <source>
        <dbReference type="HAMAP-Rule" id="MF_01158"/>
    </source>
</evidence>
<proteinExistence type="inferred from homology"/>